<dbReference type="EC" id="7.1.2.2" evidence="1"/>
<dbReference type="EMBL" id="CP000872">
    <property type="protein sequence ID" value="ABX62837.1"/>
    <property type="molecule type" value="Genomic_DNA"/>
</dbReference>
<dbReference type="RefSeq" id="WP_002967929.1">
    <property type="nucleotide sequence ID" value="NC_010103.1"/>
</dbReference>
<dbReference type="SMR" id="A9M839"/>
<dbReference type="GeneID" id="55591399"/>
<dbReference type="KEGG" id="bcs:BCAN_A1839"/>
<dbReference type="HOGENOM" id="CLU_010091_2_1_5"/>
<dbReference type="PhylomeDB" id="A9M839"/>
<dbReference type="Proteomes" id="UP000001385">
    <property type="component" value="Chromosome I"/>
</dbReference>
<dbReference type="GO" id="GO:0005886">
    <property type="term" value="C:plasma membrane"/>
    <property type="evidence" value="ECO:0007669"/>
    <property type="project" value="UniProtKB-SubCell"/>
</dbReference>
<dbReference type="GO" id="GO:0045259">
    <property type="term" value="C:proton-transporting ATP synthase complex"/>
    <property type="evidence" value="ECO:0007669"/>
    <property type="project" value="UniProtKB-KW"/>
</dbReference>
<dbReference type="GO" id="GO:0043531">
    <property type="term" value="F:ADP binding"/>
    <property type="evidence" value="ECO:0007669"/>
    <property type="project" value="TreeGrafter"/>
</dbReference>
<dbReference type="GO" id="GO:0005524">
    <property type="term" value="F:ATP binding"/>
    <property type="evidence" value="ECO:0007669"/>
    <property type="project" value="UniProtKB-UniRule"/>
</dbReference>
<dbReference type="GO" id="GO:0046933">
    <property type="term" value="F:proton-transporting ATP synthase activity, rotational mechanism"/>
    <property type="evidence" value="ECO:0007669"/>
    <property type="project" value="UniProtKB-UniRule"/>
</dbReference>
<dbReference type="CDD" id="cd18113">
    <property type="entry name" value="ATP-synt_F1_alpha_C"/>
    <property type="match status" value="1"/>
</dbReference>
<dbReference type="CDD" id="cd18116">
    <property type="entry name" value="ATP-synt_F1_alpha_N"/>
    <property type="match status" value="1"/>
</dbReference>
<dbReference type="CDD" id="cd01132">
    <property type="entry name" value="F1-ATPase_alpha_CD"/>
    <property type="match status" value="1"/>
</dbReference>
<dbReference type="FunFam" id="1.20.150.20:FF:000001">
    <property type="entry name" value="ATP synthase subunit alpha"/>
    <property type="match status" value="1"/>
</dbReference>
<dbReference type="FunFam" id="2.40.30.20:FF:000001">
    <property type="entry name" value="ATP synthase subunit alpha"/>
    <property type="match status" value="1"/>
</dbReference>
<dbReference type="FunFam" id="3.40.50.300:FF:002432">
    <property type="entry name" value="ATP synthase subunit alpha, mitochondrial"/>
    <property type="match status" value="1"/>
</dbReference>
<dbReference type="Gene3D" id="2.40.30.20">
    <property type="match status" value="1"/>
</dbReference>
<dbReference type="Gene3D" id="1.20.150.20">
    <property type="entry name" value="ATP synthase alpha/beta chain, C-terminal domain"/>
    <property type="match status" value="1"/>
</dbReference>
<dbReference type="Gene3D" id="3.40.50.300">
    <property type="entry name" value="P-loop containing nucleotide triphosphate hydrolases"/>
    <property type="match status" value="1"/>
</dbReference>
<dbReference type="HAMAP" id="MF_01346">
    <property type="entry name" value="ATP_synth_alpha_bact"/>
    <property type="match status" value="1"/>
</dbReference>
<dbReference type="InterPro" id="IPR023366">
    <property type="entry name" value="ATP_synth_asu-like_sf"/>
</dbReference>
<dbReference type="InterPro" id="IPR000793">
    <property type="entry name" value="ATP_synth_asu_C"/>
</dbReference>
<dbReference type="InterPro" id="IPR038376">
    <property type="entry name" value="ATP_synth_asu_C_sf"/>
</dbReference>
<dbReference type="InterPro" id="IPR033732">
    <property type="entry name" value="ATP_synth_F1_a_nt-bd_dom"/>
</dbReference>
<dbReference type="InterPro" id="IPR005294">
    <property type="entry name" value="ATP_synth_F1_asu"/>
</dbReference>
<dbReference type="InterPro" id="IPR020003">
    <property type="entry name" value="ATPase_a/bsu_AS"/>
</dbReference>
<dbReference type="InterPro" id="IPR004100">
    <property type="entry name" value="ATPase_F1/V1/A1_a/bsu_N"/>
</dbReference>
<dbReference type="InterPro" id="IPR036121">
    <property type="entry name" value="ATPase_F1/V1/A1_a/bsu_N_sf"/>
</dbReference>
<dbReference type="InterPro" id="IPR000194">
    <property type="entry name" value="ATPase_F1/V1/A1_a/bsu_nucl-bd"/>
</dbReference>
<dbReference type="InterPro" id="IPR027417">
    <property type="entry name" value="P-loop_NTPase"/>
</dbReference>
<dbReference type="NCBIfam" id="TIGR00962">
    <property type="entry name" value="atpA"/>
    <property type="match status" value="1"/>
</dbReference>
<dbReference type="NCBIfam" id="NF009884">
    <property type="entry name" value="PRK13343.1"/>
    <property type="match status" value="1"/>
</dbReference>
<dbReference type="PANTHER" id="PTHR48082">
    <property type="entry name" value="ATP SYNTHASE SUBUNIT ALPHA, MITOCHONDRIAL"/>
    <property type="match status" value="1"/>
</dbReference>
<dbReference type="PANTHER" id="PTHR48082:SF2">
    <property type="entry name" value="ATP SYNTHASE SUBUNIT ALPHA, MITOCHONDRIAL"/>
    <property type="match status" value="1"/>
</dbReference>
<dbReference type="Pfam" id="PF00006">
    <property type="entry name" value="ATP-synt_ab"/>
    <property type="match status" value="1"/>
</dbReference>
<dbReference type="Pfam" id="PF00306">
    <property type="entry name" value="ATP-synt_ab_C"/>
    <property type="match status" value="1"/>
</dbReference>
<dbReference type="Pfam" id="PF02874">
    <property type="entry name" value="ATP-synt_ab_N"/>
    <property type="match status" value="1"/>
</dbReference>
<dbReference type="PIRSF" id="PIRSF039088">
    <property type="entry name" value="F_ATPase_subunit_alpha"/>
    <property type="match status" value="1"/>
</dbReference>
<dbReference type="SUPFAM" id="SSF47917">
    <property type="entry name" value="C-terminal domain of alpha and beta subunits of F1 ATP synthase"/>
    <property type="match status" value="1"/>
</dbReference>
<dbReference type="SUPFAM" id="SSF50615">
    <property type="entry name" value="N-terminal domain of alpha and beta subunits of F1 ATP synthase"/>
    <property type="match status" value="1"/>
</dbReference>
<dbReference type="SUPFAM" id="SSF52540">
    <property type="entry name" value="P-loop containing nucleoside triphosphate hydrolases"/>
    <property type="match status" value="1"/>
</dbReference>
<dbReference type="PROSITE" id="PS00152">
    <property type="entry name" value="ATPASE_ALPHA_BETA"/>
    <property type="match status" value="1"/>
</dbReference>
<proteinExistence type="inferred from homology"/>
<feature type="chain" id="PRO_1000086867" description="ATP synthase subunit alpha">
    <location>
        <begin position="1"/>
        <end position="509"/>
    </location>
</feature>
<feature type="binding site" evidence="1">
    <location>
        <begin position="169"/>
        <end position="176"/>
    </location>
    <ligand>
        <name>ATP</name>
        <dbReference type="ChEBI" id="CHEBI:30616"/>
    </ligand>
</feature>
<feature type="site" description="Required for activity" evidence="1">
    <location>
        <position position="370"/>
    </location>
</feature>
<accession>A9M839</accession>
<name>ATPA_BRUC2</name>
<gene>
    <name evidence="1" type="primary">atpA</name>
    <name type="ordered locus">BCAN_A1839</name>
</gene>
<organism>
    <name type="scientific">Brucella canis (strain ATCC 23365 / NCTC 10854 / RM-666)</name>
    <dbReference type="NCBI Taxonomy" id="483179"/>
    <lineage>
        <taxon>Bacteria</taxon>
        <taxon>Pseudomonadati</taxon>
        <taxon>Pseudomonadota</taxon>
        <taxon>Alphaproteobacteria</taxon>
        <taxon>Hyphomicrobiales</taxon>
        <taxon>Brucellaceae</taxon>
        <taxon>Brucella/Ochrobactrum group</taxon>
        <taxon>Brucella</taxon>
    </lineage>
</organism>
<protein>
    <recommendedName>
        <fullName evidence="1">ATP synthase subunit alpha</fullName>
        <ecNumber evidence="1">7.1.2.2</ecNumber>
    </recommendedName>
    <alternativeName>
        <fullName evidence="1">ATP synthase F1 sector subunit alpha</fullName>
    </alternativeName>
    <alternativeName>
        <fullName evidence="1">F-ATPase subunit alpha</fullName>
    </alternativeName>
</protein>
<keyword id="KW-0066">ATP synthesis</keyword>
<keyword id="KW-0067">ATP-binding</keyword>
<keyword id="KW-0997">Cell inner membrane</keyword>
<keyword id="KW-1003">Cell membrane</keyword>
<keyword id="KW-0139">CF(1)</keyword>
<keyword id="KW-0375">Hydrogen ion transport</keyword>
<keyword id="KW-0406">Ion transport</keyword>
<keyword id="KW-0472">Membrane</keyword>
<keyword id="KW-0547">Nucleotide-binding</keyword>
<keyword id="KW-1185">Reference proteome</keyword>
<keyword id="KW-1278">Translocase</keyword>
<keyword id="KW-0813">Transport</keyword>
<sequence length="509" mass="54942">MDIRAAEISAILKEQIKNFGKEAEVSEVGQVLSVGDGIARVYGLDNVQAGEMVEFPGGIRGMALNLESDNVGVVIFGADRDIKEGDVVKRTGAIVDVPVGPELLGRVVDALGNPIDGKGPIKAKERRRVDVKAPGIIPRKSVHEPMSTGLKAIDALIPVGRGQRELVIGDRQTGKTAIILDTFLNQKPIHDNGPDKDKLYCVYVAVGQKRSTVAQFVKVLEERGALEYSIVVAATASDPAPMQYLAPFAGCAMGEYFRDNGQHALIGYDDLSKQAVAYRQMSLLLRRPPGREAYPGDVFYLHSRLLERAAKLNDENGAGSLTALPVIETQGNDVSAFIPTNVISITDGQIFLETNLFYQGIRPAVNVGLSVSRVGSSAQIKAMKQVAGSIKGELAQYREMAAFAQFGSDLDAATQRLLNRGARLTELLKQPQFSPLKTEEQVAVIYAGVNGYLDKLAVNQVGKFEEGLLASLRTEHKDVLEGIRNEKALTDDLKAKLKAAIDAFAKSFA</sequence>
<comment type="function">
    <text evidence="1">Produces ATP from ADP in the presence of a proton gradient across the membrane. The alpha chain is a regulatory subunit.</text>
</comment>
<comment type="catalytic activity">
    <reaction evidence="1">
        <text>ATP + H2O + 4 H(+)(in) = ADP + phosphate + 5 H(+)(out)</text>
        <dbReference type="Rhea" id="RHEA:57720"/>
        <dbReference type="ChEBI" id="CHEBI:15377"/>
        <dbReference type="ChEBI" id="CHEBI:15378"/>
        <dbReference type="ChEBI" id="CHEBI:30616"/>
        <dbReference type="ChEBI" id="CHEBI:43474"/>
        <dbReference type="ChEBI" id="CHEBI:456216"/>
        <dbReference type="EC" id="7.1.2.2"/>
    </reaction>
</comment>
<comment type="subunit">
    <text evidence="1">F-type ATPases have 2 components, CF(1) - the catalytic core - and CF(0) - the membrane proton channel. CF(1) has five subunits: alpha(3), beta(3), gamma(1), delta(1), epsilon(1). CF(0) has three main subunits: a(1), b(2) and c(9-12). The alpha and beta chains form an alternating ring which encloses part of the gamma chain. CF(1) is attached to CF(0) by a central stalk formed by the gamma and epsilon chains, while a peripheral stalk is formed by the delta and b chains.</text>
</comment>
<comment type="subcellular location">
    <subcellularLocation>
        <location evidence="1">Cell inner membrane</location>
        <topology evidence="1">Peripheral membrane protein</topology>
    </subcellularLocation>
</comment>
<comment type="similarity">
    <text evidence="1">Belongs to the ATPase alpha/beta chains family.</text>
</comment>
<evidence type="ECO:0000255" key="1">
    <source>
        <dbReference type="HAMAP-Rule" id="MF_01346"/>
    </source>
</evidence>
<reference key="1">
    <citation type="submission" date="2007-10" db="EMBL/GenBank/DDBJ databases">
        <title>Brucella canis ATCC 23365 whole genome shotgun sequencing project.</title>
        <authorList>
            <person name="Setubal J.C."/>
            <person name="Bowns C."/>
            <person name="Boyle S."/>
            <person name="Crasta O.R."/>
            <person name="Czar M.J."/>
            <person name="Dharmanolla C."/>
            <person name="Gillespie J.J."/>
            <person name="Kenyon R.W."/>
            <person name="Lu J."/>
            <person name="Mane S."/>
            <person name="Mohapatra S."/>
            <person name="Nagrani S."/>
            <person name="Purkayastha A."/>
            <person name="Rajasimha H.K."/>
            <person name="Shallom J.M."/>
            <person name="Shallom S."/>
            <person name="Shukla M."/>
            <person name="Snyder E.E."/>
            <person name="Sobral B.W."/>
            <person name="Wattam A.R."/>
            <person name="Will R."/>
            <person name="Williams K."/>
            <person name="Yoo H."/>
            <person name="Bruce D."/>
            <person name="Detter C."/>
            <person name="Munk C."/>
            <person name="Brettin T.S."/>
        </authorList>
    </citation>
    <scope>NUCLEOTIDE SEQUENCE [LARGE SCALE GENOMIC DNA]</scope>
    <source>
        <strain>ATCC 23365 / NCTC 10854 / RM-666</strain>
    </source>
</reference>